<name>ATPF_PROMS</name>
<feature type="chain" id="PRO_0000368663" description="ATP synthase subunit b">
    <location>
        <begin position="1"/>
        <end position="170"/>
    </location>
</feature>
<feature type="transmembrane region" description="Helical" evidence="1">
    <location>
        <begin position="22"/>
        <end position="41"/>
    </location>
</feature>
<feature type="region of interest" description="Disordered" evidence="2">
    <location>
        <begin position="76"/>
        <end position="98"/>
    </location>
</feature>
<feature type="compositionally biased region" description="Basic and acidic residues" evidence="2">
    <location>
        <begin position="89"/>
        <end position="98"/>
    </location>
</feature>
<evidence type="ECO:0000255" key="1">
    <source>
        <dbReference type="HAMAP-Rule" id="MF_01398"/>
    </source>
</evidence>
<evidence type="ECO:0000256" key="2">
    <source>
        <dbReference type="SAM" id="MobiDB-lite"/>
    </source>
</evidence>
<dbReference type="EMBL" id="CP000551">
    <property type="protein sequence ID" value="ABM70938.1"/>
    <property type="molecule type" value="Genomic_DNA"/>
</dbReference>
<dbReference type="RefSeq" id="WP_011819068.1">
    <property type="nucleotide sequence ID" value="NC_008816.1"/>
</dbReference>
<dbReference type="SMR" id="A2BT27"/>
<dbReference type="STRING" id="146891.A9601_16551"/>
<dbReference type="KEGG" id="pmb:A9601_16551"/>
<dbReference type="eggNOG" id="COG0711">
    <property type="taxonomic scope" value="Bacteria"/>
</dbReference>
<dbReference type="HOGENOM" id="CLU_079215_8_1_3"/>
<dbReference type="OrthoDB" id="461217at2"/>
<dbReference type="Proteomes" id="UP000002590">
    <property type="component" value="Chromosome"/>
</dbReference>
<dbReference type="GO" id="GO:0031676">
    <property type="term" value="C:plasma membrane-derived thylakoid membrane"/>
    <property type="evidence" value="ECO:0007669"/>
    <property type="project" value="UniProtKB-SubCell"/>
</dbReference>
<dbReference type="GO" id="GO:0045259">
    <property type="term" value="C:proton-transporting ATP synthase complex"/>
    <property type="evidence" value="ECO:0007669"/>
    <property type="project" value="UniProtKB-KW"/>
</dbReference>
<dbReference type="GO" id="GO:0046933">
    <property type="term" value="F:proton-transporting ATP synthase activity, rotational mechanism"/>
    <property type="evidence" value="ECO:0007669"/>
    <property type="project" value="UniProtKB-UniRule"/>
</dbReference>
<dbReference type="CDD" id="cd06503">
    <property type="entry name" value="ATP-synt_Fo_b"/>
    <property type="match status" value="1"/>
</dbReference>
<dbReference type="HAMAP" id="MF_01398">
    <property type="entry name" value="ATP_synth_b_bprime"/>
    <property type="match status" value="1"/>
</dbReference>
<dbReference type="InterPro" id="IPR002146">
    <property type="entry name" value="ATP_synth_b/b'su_bac/chlpt"/>
</dbReference>
<dbReference type="NCBIfam" id="NF005606">
    <property type="entry name" value="PRK07352.1"/>
    <property type="match status" value="1"/>
</dbReference>
<dbReference type="PANTHER" id="PTHR34264">
    <property type="entry name" value="ATP SYNTHASE SUBUNIT B, CHLOROPLASTIC"/>
    <property type="match status" value="1"/>
</dbReference>
<dbReference type="PANTHER" id="PTHR34264:SF3">
    <property type="entry name" value="ATP SYNTHASE SUBUNIT B, CHLOROPLASTIC"/>
    <property type="match status" value="1"/>
</dbReference>
<dbReference type="Pfam" id="PF00430">
    <property type="entry name" value="ATP-synt_B"/>
    <property type="match status" value="1"/>
</dbReference>
<sequence>MNLTLLATEGFGLNFNLFETNILNWAVVVFGLYKFLPGFLGKMLQKRREGILLELKDAEDRLLNATQALEKAKKDLSSAAEKASQIKADSLKRSESIRMESEKKAIEEMARIKQSAISDESSEASRAISQLRKEAVELAIKKALDSLPNRLDKTTQENLVTQSINNIEVN</sequence>
<reference key="1">
    <citation type="journal article" date="2007" name="PLoS Genet.">
        <title>Patterns and implications of gene gain and loss in the evolution of Prochlorococcus.</title>
        <authorList>
            <person name="Kettler G.C."/>
            <person name="Martiny A.C."/>
            <person name="Huang K."/>
            <person name="Zucker J."/>
            <person name="Coleman M.L."/>
            <person name="Rodrigue S."/>
            <person name="Chen F."/>
            <person name="Lapidus A."/>
            <person name="Ferriera S."/>
            <person name="Johnson J."/>
            <person name="Steglich C."/>
            <person name="Church G.M."/>
            <person name="Richardson P."/>
            <person name="Chisholm S.W."/>
        </authorList>
    </citation>
    <scope>NUCLEOTIDE SEQUENCE [LARGE SCALE GENOMIC DNA]</scope>
    <source>
        <strain>AS9601</strain>
    </source>
</reference>
<protein>
    <recommendedName>
        <fullName evidence="1">ATP synthase subunit b</fullName>
    </recommendedName>
    <alternativeName>
        <fullName evidence="1">ATP synthase F(0) sector subunit b</fullName>
    </alternativeName>
    <alternativeName>
        <fullName evidence="1">ATPase subunit I</fullName>
    </alternativeName>
    <alternativeName>
        <fullName evidence="1">F-type ATPase subunit b</fullName>
        <shortName evidence="1">F-ATPase subunit b</shortName>
    </alternativeName>
</protein>
<organism>
    <name type="scientific">Prochlorococcus marinus (strain AS9601)</name>
    <dbReference type="NCBI Taxonomy" id="146891"/>
    <lineage>
        <taxon>Bacteria</taxon>
        <taxon>Bacillati</taxon>
        <taxon>Cyanobacteriota</taxon>
        <taxon>Cyanophyceae</taxon>
        <taxon>Synechococcales</taxon>
        <taxon>Prochlorococcaceae</taxon>
        <taxon>Prochlorococcus</taxon>
    </lineage>
</organism>
<comment type="function">
    <text evidence="1">F(1)F(0) ATP synthase produces ATP from ADP in the presence of a proton or sodium gradient. F-type ATPases consist of two structural domains, F(1) containing the extramembraneous catalytic core and F(0) containing the membrane proton channel, linked together by a central stalk and a peripheral stalk. During catalysis, ATP synthesis in the catalytic domain of F(1) is coupled via a rotary mechanism of the central stalk subunits to proton translocation.</text>
</comment>
<comment type="function">
    <text evidence="1">Component of the F(0) channel, it forms part of the peripheral stalk, linking F(1) to F(0).</text>
</comment>
<comment type="subunit">
    <text evidence="1">F-type ATPases have 2 components, F(1) - the catalytic core - and F(0) - the membrane proton channel. F(1) has five subunits: alpha(3), beta(3), gamma(1), delta(1), epsilon(1). F(0) has four main subunits: a(1), b(1), b'(1) and c(10-14). The alpha and beta chains form an alternating ring which encloses part of the gamma chain. F(1) is attached to F(0) by a central stalk formed by the gamma and epsilon chains, while a peripheral stalk is formed by the delta, b and b' chains.</text>
</comment>
<comment type="subcellular location">
    <subcellularLocation>
        <location evidence="1">Cellular thylakoid membrane</location>
        <topology evidence="1">Single-pass membrane protein</topology>
    </subcellularLocation>
</comment>
<comment type="similarity">
    <text evidence="1">Belongs to the ATPase B chain family.</text>
</comment>
<proteinExistence type="inferred from homology"/>
<accession>A2BT27</accession>
<gene>
    <name evidence="1" type="primary">atpF</name>
    <name type="ordered locus">A9601_16551</name>
</gene>
<keyword id="KW-0066">ATP synthesis</keyword>
<keyword id="KW-0138">CF(0)</keyword>
<keyword id="KW-0375">Hydrogen ion transport</keyword>
<keyword id="KW-0406">Ion transport</keyword>
<keyword id="KW-0472">Membrane</keyword>
<keyword id="KW-0793">Thylakoid</keyword>
<keyword id="KW-0812">Transmembrane</keyword>
<keyword id="KW-1133">Transmembrane helix</keyword>
<keyword id="KW-0813">Transport</keyword>